<sequence length="833" mass="94422">MSFYNHKEIEPKWQKYWADHHTFKTGTDASKPKFYALDMFPYPSGAGLHVGHPEGYTATDILSRFKRAQGYNVLHPMGWDAFGLPAEQYAMDTGNDPADFTAENIANFKRQINALGFSYDWDREINTTDPNYYKWTQWIFTKLYEKGLAYEAEVPVNWVEELGTAIANEEVLPDGTSERGGYPVVRKPMRQWMLKITAYAERLLNDLDELDWPESIKDMQRNWIGKSTGANVTFKVKGTDKEFTVFTTRPDTLFGATFTVLAPEHDLVDAITSPEQAEAVANYKHQASLKSDLARTDLAKEKTGVWTGAYAINPVNGREIPIWIADYVLASYGTGAVMAVPAHDERDWEFAKQFGLPIVEVLEGGNVEEAAYTEDGPHVNSDFLNGLNKEEAIAKIVAWLEEKGFGQEKITYRLRDWLFSRQRYWGEPIPIIHWEDGTSTAVPESELPLVLPVTKDIRPSGTGESPLANLTDWLEVTREDGVKGRRETNTMPQWAGSSWYYLRYIDPHNTEKLADEDLLKQWLPVDIYVGGAEHAVLHLLYARFWHKFLYDLGVVPTKEPFQKLFNQGMILGTSYRDHRGALVATDKVEKRDGSFFHVETGEELEQAPAKMSKSLKNVVNPDDVVEQYGADTLRVYEMFMGPLDASIAWSEEGLEGSRKFLDRVYRLITSKEIVAENNGGLDKVYNETVKSVTEQIELMKFNTAIAQLMVFVNAANKEDKLYVDYAKGFVQLIAPFAPHLAEELWQTLTATGESISYVAWPTWDESKLVEDEIEIVVQIKGKVRAKLMVAKDLSREELQEVALADEKVKAEIDGKEIVKVIAVPNKLVNIVVK</sequence>
<keyword id="KW-0030">Aminoacyl-tRNA synthetase</keyword>
<keyword id="KW-0067">ATP-binding</keyword>
<keyword id="KW-0963">Cytoplasm</keyword>
<keyword id="KW-0436">Ligase</keyword>
<keyword id="KW-0547">Nucleotide-binding</keyword>
<keyword id="KW-0648">Protein biosynthesis</keyword>
<keyword id="KW-1185">Reference proteome</keyword>
<accession>Q5M657</accession>
<evidence type="ECO:0000255" key="1">
    <source>
        <dbReference type="HAMAP-Rule" id="MF_00049"/>
    </source>
</evidence>
<name>SYL_STRT2</name>
<organism>
    <name type="scientific">Streptococcus thermophilus (strain ATCC BAA-250 / LMG 18311)</name>
    <dbReference type="NCBI Taxonomy" id="264199"/>
    <lineage>
        <taxon>Bacteria</taxon>
        <taxon>Bacillati</taxon>
        <taxon>Bacillota</taxon>
        <taxon>Bacilli</taxon>
        <taxon>Lactobacillales</taxon>
        <taxon>Streptococcaceae</taxon>
        <taxon>Streptococcus</taxon>
    </lineage>
</organism>
<feature type="chain" id="PRO_1000009451" description="Leucine--tRNA ligase">
    <location>
        <begin position="1"/>
        <end position="833"/>
    </location>
</feature>
<feature type="short sequence motif" description="'HIGH' region">
    <location>
        <begin position="41"/>
        <end position="52"/>
    </location>
</feature>
<feature type="short sequence motif" description="'KMSKS' region">
    <location>
        <begin position="610"/>
        <end position="614"/>
    </location>
</feature>
<feature type="binding site" evidence="1">
    <location>
        <position position="613"/>
    </location>
    <ligand>
        <name>ATP</name>
        <dbReference type="ChEBI" id="CHEBI:30616"/>
    </ligand>
</feature>
<reference key="1">
    <citation type="journal article" date="2004" name="Nat. Biotechnol.">
        <title>Complete sequence and comparative genome analysis of the dairy bacterium Streptococcus thermophilus.</title>
        <authorList>
            <person name="Bolotin A."/>
            <person name="Quinquis B."/>
            <person name="Renault P."/>
            <person name="Sorokin A."/>
            <person name="Ehrlich S.D."/>
            <person name="Kulakauskas S."/>
            <person name="Lapidus A."/>
            <person name="Goltsman E."/>
            <person name="Mazur M."/>
            <person name="Pusch G.D."/>
            <person name="Fonstein M."/>
            <person name="Overbeek R."/>
            <person name="Kyprides N."/>
            <person name="Purnelle B."/>
            <person name="Prozzi D."/>
            <person name="Ngui K."/>
            <person name="Masuy D."/>
            <person name="Hancy F."/>
            <person name="Burteau S."/>
            <person name="Boutry M."/>
            <person name="Delcour J."/>
            <person name="Goffeau A."/>
            <person name="Hols P."/>
        </authorList>
    </citation>
    <scope>NUCLEOTIDE SEQUENCE [LARGE SCALE GENOMIC DNA]</scope>
    <source>
        <strain>ATCC BAA-250 / LMG 18311</strain>
    </source>
</reference>
<gene>
    <name evidence="1" type="primary">leuS</name>
    <name type="ordered locus">stu0220</name>
</gene>
<dbReference type="EC" id="6.1.1.4" evidence="1"/>
<dbReference type="EMBL" id="CP000023">
    <property type="protein sequence ID" value="AAV59945.1"/>
    <property type="molecule type" value="Genomic_DNA"/>
</dbReference>
<dbReference type="RefSeq" id="WP_002947934.1">
    <property type="nucleotide sequence ID" value="NC_006448.1"/>
</dbReference>
<dbReference type="SMR" id="Q5M657"/>
<dbReference type="STRING" id="264199.stu0220"/>
<dbReference type="GeneID" id="66898153"/>
<dbReference type="KEGG" id="stl:stu0220"/>
<dbReference type="eggNOG" id="COG0495">
    <property type="taxonomic scope" value="Bacteria"/>
</dbReference>
<dbReference type="HOGENOM" id="CLU_004427_0_0_9"/>
<dbReference type="Proteomes" id="UP000001170">
    <property type="component" value="Chromosome"/>
</dbReference>
<dbReference type="GO" id="GO:0005829">
    <property type="term" value="C:cytosol"/>
    <property type="evidence" value="ECO:0007669"/>
    <property type="project" value="TreeGrafter"/>
</dbReference>
<dbReference type="GO" id="GO:0002161">
    <property type="term" value="F:aminoacyl-tRNA deacylase activity"/>
    <property type="evidence" value="ECO:0007669"/>
    <property type="project" value="InterPro"/>
</dbReference>
<dbReference type="GO" id="GO:0005524">
    <property type="term" value="F:ATP binding"/>
    <property type="evidence" value="ECO:0007669"/>
    <property type="project" value="UniProtKB-UniRule"/>
</dbReference>
<dbReference type="GO" id="GO:0004823">
    <property type="term" value="F:leucine-tRNA ligase activity"/>
    <property type="evidence" value="ECO:0007669"/>
    <property type="project" value="UniProtKB-UniRule"/>
</dbReference>
<dbReference type="GO" id="GO:0006429">
    <property type="term" value="P:leucyl-tRNA aminoacylation"/>
    <property type="evidence" value="ECO:0007669"/>
    <property type="project" value="UniProtKB-UniRule"/>
</dbReference>
<dbReference type="CDD" id="cd07958">
    <property type="entry name" value="Anticodon_Ia_Leu_BEm"/>
    <property type="match status" value="1"/>
</dbReference>
<dbReference type="CDD" id="cd00812">
    <property type="entry name" value="LeuRS_core"/>
    <property type="match status" value="1"/>
</dbReference>
<dbReference type="FunFam" id="1.10.730.10:FF:000012">
    <property type="entry name" value="Leucine--tRNA ligase"/>
    <property type="match status" value="1"/>
</dbReference>
<dbReference type="FunFam" id="3.40.50.620:FF:000056">
    <property type="entry name" value="Leucine--tRNA ligase"/>
    <property type="match status" value="1"/>
</dbReference>
<dbReference type="FunFam" id="3.40.50.620:FF:000077">
    <property type="entry name" value="Leucine--tRNA ligase"/>
    <property type="match status" value="1"/>
</dbReference>
<dbReference type="FunFam" id="1.10.730.10:FF:000011">
    <property type="entry name" value="Leucine--tRNA ligase chloroplastic/mitochondrial"/>
    <property type="match status" value="1"/>
</dbReference>
<dbReference type="Gene3D" id="3.40.50.620">
    <property type="entry name" value="HUPs"/>
    <property type="match status" value="2"/>
</dbReference>
<dbReference type="Gene3D" id="1.10.730.10">
    <property type="entry name" value="Isoleucyl-tRNA Synthetase, Domain 1"/>
    <property type="match status" value="1"/>
</dbReference>
<dbReference type="Gene3D" id="3.90.740.10">
    <property type="entry name" value="Valyl/Leucyl/Isoleucyl-tRNA synthetase, editing domain"/>
    <property type="match status" value="1"/>
</dbReference>
<dbReference type="HAMAP" id="MF_00049_B">
    <property type="entry name" value="Leu_tRNA_synth_B"/>
    <property type="match status" value="1"/>
</dbReference>
<dbReference type="InterPro" id="IPR001412">
    <property type="entry name" value="aa-tRNA-synth_I_CS"/>
</dbReference>
<dbReference type="InterPro" id="IPR002300">
    <property type="entry name" value="aa-tRNA-synth_Ia"/>
</dbReference>
<dbReference type="InterPro" id="IPR002302">
    <property type="entry name" value="Leu-tRNA-ligase"/>
</dbReference>
<dbReference type="InterPro" id="IPR025709">
    <property type="entry name" value="Leu_tRNA-synth_edit"/>
</dbReference>
<dbReference type="InterPro" id="IPR013155">
    <property type="entry name" value="M/V/L/I-tRNA-synth_anticd-bd"/>
</dbReference>
<dbReference type="InterPro" id="IPR015413">
    <property type="entry name" value="Methionyl/Leucyl_tRNA_Synth"/>
</dbReference>
<dbReference type="InterPro" id="IPR014729">
    <property type="entry name" value="Rossmann-like_a/b/a_fold"/>
</dbReference>
<dbReference type="InterPro" id="IPR009080">
    <property type="entry name" value="tRNAsynth_Ia_anticodon-bd"/>
</dbReference>
<dbReference type="InterPro" id="IPR009008">
    <property type="entry name" value="Val/Leu/Ile-tRNA-synth_edit"/>
</dbReference>
<dbReference type="NCBIfam" id="TIGR00396">
    <property type="entry name" value="leuS_bact"/>
    <property type="match status" value="1"/>
</dbReference>
<dbReference type="PANTHER" id="PTHR43740:SF2">
    <property type="entry name" value="LEUCINE--TRNA LIGASE, MITOCHONDRIAL"/>
    <property type="match status" value="1"/>
</dbReference>
<dbReference type="PANTHER" id="PTHR43740">
    <property type="entry name" value="LEUCYL-TRNA SYNTHETASE"/>
    <property type="match status" value="1"/>
</dbReference>
<dbReference type="Pfam" id="PF08264">
    <property type="entry name" value="Anticodon_1"/>
    <property type="match status" value="1"/>
</dbReference>
<dbReference type="Pfam" id="PF00133">
    <property type="entry name" value="tRNA-synt_1"/>
    <property type="match status" value="2"/>
</dbReference>
<dbReference type="Pfam" id="PF13603">
    <property type="entry name" value="tRNA-synt_1_2"/>
    <property type="match status" value="1"/>
</dbReference>
<dbReference type="Pfam" id="PF09334">
    <property type="entry name" value="tRNA-synt_1g"/>
    <property type="match status" value="1"/>
</dbReference>
<dbReference type="PRINTS" id="PR00985">
    <property type="entry name" value="TRNASYNTHLEU"/>
</dbReference>
<dbReference type="SUPFAM" id="SSF47323">
    <property type="entry name" value="Anticodon-binding domain of a subclass of class I aminoacyl-tRNA synthetases"/>
    <property type="match status" value="1"/>
</dbReference>
<dbReference type="SUPFAM" id="SSF52374">
    <property type="entry name" value="Nucleotidylyl transferase"/>
    <property type="match status" value="1"/>
</dbReference>
<dbReference type="SUPFAM" id="SSF50677">
    <property type="entry name" value="ValRS/IleRS/LeuRS editing domain"/>
    <property type="match status" value="1"/>
</dbReference>
<dbReference type="PROSITE" id="PS00178">
    <property type="entry name" value="AA_TRNA_LIGASE_I"/>
    <property type="match status" value="1"/>
</dbReference>
<proteinExistence type="inferred from homology"/>
<protein>
    <recommendedName>
        <fullName evidence="1">Leucine--tRNA ligase</fullName>
        <ecNumber evidence="1">6.1.1.4</ecNumber>
    </recommendedName>
    <alternativeName>
        <fullName evidence="1">Leucyl-tRNA synthetase</fullName>
        <shortName evidence="1">LeuRS</shortName>
    </alternativeName>
</protein>
<comment type="catalytic activity">
    <reaction evidence="1">
        <text>tRNA(Leu) + L-leucine + ATP = L-leucyl-tRNA(Leu) + AMP + diphosphate</text>
        <dbReference type="Rhea" id="RHEA:11688"/>
        <dbReference type="Rhea" id="RHEA-COMP:9613"/>
        <dbReference type="Rhea" id="RHEA-COMP:9622"/>
        <dbReference type="ChEBI" id="CHEBI:30616"/>
        <dbReference type="ChEBI" id="CHEBI:33019"/>
        <dbReference type="ChEBI" id="CHEBI:57427"/>
        <dbReference type="ChEBI" id="CHEBI:78442"/>
        <dbReference type="ChEBI" id="CHEBI:78494"/>
        <dbReference type="ChEBI" id="CHEBI:456215"/>
        <dbReference type="EC" id="6.1.1.4"/>
    </reaction>
</comment>
<comment type="subcellular location">
    <subcellularLocation>
        <location evidence="1">Cytoplasm</location>
    </subcellularLocation>
</comment>
<comment type="similarity">
    <text evidence="1">Belongs to the class-I aminoacyl-tRNA synthetase family.</text>
</comment>